<evidence type="ECO:0000255" key="1">
    <source>
        <dbReference type="HAMAP-Rule" id="MF_00390"/>
    </source>
</evidence>
<dbReference type="EC" id="2.8.1.-" evidence="1"/>
<dbReference type="EMBL" id="AE014075">
    <property type="protein sequence ID" value="AAN82557.1"/>
    <property type="molecule type" value="Genomic_DNA"/>
</dbReference>
<dbReference type="RefSeq" id="WP_001209702.1">
    <property type="nucleotide sequence ID" value="NZ_CP051263.1"/>
</dbReference>
<dbReference type="SMR" id="Q8FCY1"/>
<dbReference type="STRING" id="199310.c4119"/>
<dbReference type="KEGG" id="ecc:c4119"/>
<dbReference type="eggNOG" id="COG1553">
    <property type="taxonomic scope" value="Bacteria"/>
</dbReference>
<dbReference type="HOGENOM" id="CLU_132095_0_0_6"/>
<dbReference type="BioCyc" id="ECOL199310:C4119-MONOMER"/>
<dbReference type="Proteomes" id="UP000001410">
    <property type="component" value="Chromosome"/>
</dbReference>
<dbReference type="GO" id="GO:1990228">
    <property type="term" value="C:sulfurtransferase complex"/>
    <property type="evidence" value="ECO:0007669"/>
    <property type="project" value="TreeGrafter"/>
</dbReference>
<dbReference type="GO" id="GO:0097163">
    <property type="term" value="F:sulfur carrier activity"/>
    <property type="evidence" value="ECO:0007669"/>
    <property type="project" value="TreeGrafter"/>
</dbReference>
<dbReference type="GO" id="GO:0016783">
    <property type="term" value="F:sulfurtransferase activity"/>
    <property type="evidence" value="ECO:0007669"/>
    <property type="project" value="UniProtKB-UniRule"/>
</dbReference>
<dbReference type="GO" id="GO:0002143">
    <property type="term" value="P:tRNA wobble position uridine thiolation"/>
    <property type="evidence" value="ECO:0007669"/>
    <property type="project" value="TreeGrafter"/>
</dbReference>
<dbReference type="FunFam" id="3.40.1260.10:FF:000001">
    <property type="entry name" value="Sulfurtransferase TusD"/>
    <property type="match status" value="1"/>
</dbReference>
<dbReference type="Gene3D" id="3.40.1260.10">
    <property type="entry name" value="DsrEFH-like"/>
    <property type="match status" value="1"/>
</dbReference>
<dbReference type="HAMAP" id="MF_00390">
    <property type="entry name" value="Thiourid_synth_D"/>
    <property type="match status" value="1"/>
</dbReference>
<dbReference type="InterPro" id="IPR027396">
    <property type="entry name" value="DsrEFH-like"/>
</dbReference>
<dbReference type="InterPro" id="IPR003787">
    <property type="entry name" value="Sulphur_relay_DsrE/F-like"/>
</dbReference>
<dbReference type="InterPro" id="IPR017463">
    <property type="entry name" value="Sulphur_relay_TusD/DsrE"/>
</dbReference>
<dbReference type="NCBIfam" id="NF001237">
    <property type="entry name" value="PRK00207.1"/>
    <property type="match status" value="1"/>
</dbReference>
<dbReference type="NCBIfam" id="TIGR03012">
    <property type="entry name" value="sulf_tusD_dsrE"/>
    <property type="match status" value="1"/>
</dbReference>
<dbReference type="PANTHER" id="PTHR34874">
    <property type="entry name" value="PROTEIN YCHN"/>
    <property type="match status" value="1"/>
</dbReference>
<dbReference type="PANTHER" id="PTHR34874:SF3">
    <property type="entry name" value="SULFURTRANSFERASE TUSD"/>
    <property type="match status" value="1"/>
</dbReference>
<dbReference type="Pfam" id="PF02635">
    <property type="entry name" value="DsrE"/>
    <property type="match status" value="1"/>
</dbReference>
<dbReference type="SUPFAM" id="SSF75169">
    <property type="entry name" value="DsrEFH-like"/>
    <property type="match status" value="1"/>
</dbReference>
<organism>
    <name type="scientific">Escherichia coli O6:H1 (strain CFT073 / ATCC 700928 / UPEC)</name>
    <dbReference type="NCBI Taxonomy" id="199310"/>
    <lineage>
        <taxon>Bacteria</taxon>
        <taxon>Pseudomonadati</taxon>
        <taxon>Pseudomonadota</taxon>
        <taxon>Gammaproteobacteria</taxon>
        <taxon>Enterobacterales</taxon>
        <taxon>Enterobacteriaceae</taxon>
        <taxon>Escherichia</taxon>
    </lineage>
</organism>
<proteinExistence type="inferred from homology"/>
<feature type="chain" id="PRO_0000214725" description="Sulfurtransferase TusD">
    <location>
        <begin position="1"/>
        <end position="128"/>
    </location>
</feature>
<feature type="active site" description="Cysteine persulfide intermediate" evidence="1">
    <location>
        <position position="78"/>
    </location>
</feature>
<protein>
    <recommendedName>
        <fullName evidence="1">Sulfurtransferase TusD</fullName>
        <ecNumber evidence="1">2.8.1.-</ecNumber>
    </recommendedName>
    <alternativeName>
        <fullName evidence="1">tRNA 2-thiouridine synthesizing protein D</fullName>
    </alternativeName>
</protein>
<gene>
    <name evidence="1" type="primary">tusD</name>
    <name type="ordered locus">c4119</name>
</gene>
<sequence length="128" mass="13704">MRFAIVVTGPAYGTQQASSAFQFAQALIAEGHELSSVFFYREGVYNANQLTSPASDEFDLVRSWQQLNMQHGVALNICVAAALRRGVVDETEAGRLGLASSNLQTGFTLSGLGALAEASLTCDRVVQF</sequence>
<comment type="function">
    <text evidence="1">Part of a sulfur-relay system required for 2-thiolation of 5-methylaminomethyl-2-thiouridine (mnm(5)s(2)U) at tRNA wobble positions. Accepts sulfur from TusA and transfers it in turn to TusE.</text>
</comment>
<comment type="subunit">
    <text evidence="1">Heterohexamer, formed by a dimer of trimers. The hexameric TusBCD complex contains 2 copies each of TusB, TusC and TusD. The TusBCD complex interacts with TusE.</text>
</comment>
<comment type="subcellular location">
    <subcellularLocation>
        <location evidence="1">Cytoplasm</location>
    </subcellularLocation>
</comment>
<comment type="similarity">
    <text evidence="1">Belongs to the DsrE/TusD family.</text>
</comment>
<reference key="1">
    <citation type="journal article" date="2002" name="Proc. Natl. Acad. Sci. U.S.A.">
        <title>Extensive mosaic structure revealed by the complete genome sequence of uropathogenic Escherichia coli.</title>
        <authorList>
            <person name="Welch R.A."/>
            <person name="Burland V."/>
            <person name="Plunkett G. III"/>
            <person name="Redford P."/>
            <person name="Roesch P."/>
            <person name="Rasko D."/>
            <person name="Buckles E.L."/>
            <person name="Liou S.-R."/>
            <person name="Boutin A."/>
            <person name="Hackett J."/>
            <person name="Stroud D."/>
            <person name="Mayhew G.F."/>
            <person name="Rose D.J."/>
            <person name="Zhou S."/>
            <person name="Schwartz D.C."/>
            <person name="Perna N.T."/>
            <person name="Mobley H.L.T."/>
            <person name="Donnenberg M.S."/>
            <person name="Blattner F.R."/>
        </authorList>
    </citation>
    <scope>NUCLEOTIDE SEQUENCE [LARGE SCALE GENOMIC DNA]</scope>
    <source>
        <strain>CFT073 / ATCC 700928 / UPEC</strain>
    </source>
</reference>
<accession>Q8FCY1</accession>
<keyword id="KW-0963">Cytoplasm</keyword>
<keyword id="KW-1185">Reference proteome</keyword>
<keyword id="KW-0808">Transferase</keyword>
<keyword id="KW-0819">tRNA processing</keyword>
<name>TUSD_ECOL6</name>